<accession>A8EVM2</accession>
<dbReference type="EMBL" id="CP000361">
    <property type="protein sequence ID" value="ABV67995.1"/>
    <property type="molecule type" value="Genomic_DNA"/>
</dbReference>
<dbReference type="RefSeq" id="WP_004509928.1">
    <property type="nucleotide sequence ID" value="NC_009850.1"/>
</dbReference>
<dbReference type="SMR" id="A8EVM2"/>
<dbReference type="STRING" id="367737.Abu_1748"/>
<dbReference type="GeneID" id="24304648"/>
<dbReference type="KEGG" id="abu:Abu_1748"/>
<dbReference type="eggNOG" id="COG0636">
    <property type="taxonomic scope" value="Bacteria"/>
</dbReference>
<dbReference type="HOGENOM" id="CLU_148047_0_1_7"/>
<dbReference type="Proteomes" id="UP000001136">
    <property type="component" value="Chromosome"/>
</dbReference>
<dbReference type="GO" id="GO:0005886">
    <property type="term" value="C:plasma membrane"/>
    <property type="evidence" value="ECO:0007669"/>
    <property type="project" value="UniProtKB-SubCell"/>
</dbReference>
<dbReference type="GO" id="GO:0045259">
    <property type="term" value="C:proton-transporting ATP synthase complex"/>
    <property type="evidence" value="ECO:0007669"/>
    <property type="project" value="UniProtKB-KW"/>
</dbReference>
<dbReference type="GO" id="GO:0033177">
    <property type="term" value="C:proton-transporting two-sector ATPase complex, proton-transporting domain"/>
    <property type="evidence" value="ECO:0007669"/>
    <property type="project" value="InterPro"/>
</dbReference>
<dbReference type="GO" id="GO:0008289">
    <property type="term" value="F:lipid binding"/>
    <property type="evidence" value="ECO:0007669"/>
    <property type="project" value="UniProtKB-KW"/>
</dbReference>
<dbReference type="GO" id="GO:0046933">
    <property type="term" value="F:proton-transporting ATP synthase activity, rotational mechanism"/>
    <property type="evidence" value="ECO:0007669"/>
    <property type="project" value="UniProtKB-UniRule"/>
</dbReference>
<dbReference type="CDD" id="cd18121">
    <property type="entry name" value="ATP-synt_Fo_c"/>
    <property type="match status" value="1"/>
</dbReference>
<dbReference type="FunFam" id="1.20.20.10:FF:000002">
    <property type="entry name" value="ATP synthase subunit c"/>
    <property type="match status" value="1"/>
</dbReference>
<dbReference type="Gene3D" id="1.20.20.10">
    <property type="entry name" value="F1F0 ATP synthase subunit C"/>
    <property type="match status" value="1"/>
</dbReference>
<dbReference type="HAMAP" id="MF_01396">
    <property type="entry name" value="ATP_synth_c_bact"/>
    <property type="match status" value="1"/>
</dbReference>
<dbReference type="InterPro" id="IPR005953">
    <property type="entry name" value="ATP_synth_csu_bac/chlpt"/>
</dbReference>
<dbReference type="InterPro" id="IPR000454">
    <property type="entry name" value="ATP_synth_F0_csu"/>
</dbReference>
<dbReference type="InterPro" id="IPR020537">
    <property type="entry name" value="ATP_synth_F0_csu_DDCD_BS"/>
</dbReference>
<dbReference type="InterPro" id="IPR038662">
    <property type="entry name" value="ATP_synth_F0_csu_sf"/>
</dbReference>
<dbReference type="InterPro" id="IPR002379">
    <property type="entry name" value="ATPase_proteolipid_c-like_dom"/>
</dbReference>
<dbReference type="InterPro" id="IPR035921">
    <property type="entry name" value="F/V-ATP_Csub_sf"/>
</dbReference>
<dbReference type="NCBIfam" id="TIGR01260">
    <property type="entry name" value="ATP_synt_c"/>
    <property type="match status" value="1"/>
</dbReference>
<dbReference type="NCBIfam" id="NF006295">
    <property type="entry name" value="PRK08482.1"/>
    <property type="match status" value="1"/>
</dbReference>
<dbReference type="Pfam" id="PF00137">
    <property type="entry name" value="ATP-synt_C"/>
    <property type="match status" value="1"/>
</dbReference>
<dbReference type="PRINTS" id="PR00124">
    <property type="entry name" value="ATPASEC"/>
</dbReference>
<dbReference type="SUPFAM" id="SSF81333">
    <property type="entry name" value="F1F0 ATP synthase subunit C"/>
    <property type="match status" value="1"/>
</dbReference>
<dbReference type="PROSITE" id="PS00605">
    <property type="entry name" value="ATPASE_C"/>
    <property type="match status" value="1"/>
</dbReference>
<keyword id="KW-0066">ATP synthesis</keyword>
<keyword id="KW-0997">Cell inner membrane</keyword>
<keyword id="KW-1003">Cell membrane</keyword>
<keyword id="KW-0138">CF(0)</keyword>
<keyword id="KW-0375">Hydrogen ion transport</keyword>
<keyword id="KW-0406">Ion transport</keyword>
<keyword id="KW-0446">Lipid-binding</keyword>
<keyword id="KW-0472">Membrane</keyword>
<keyword id="KW-1185">Reference proteome</keyword>
<keyword id="KW-0812">Transmembrane</keyword>
<keyword id="KW-1133">Transmembrane helix</keyword>
<keyword id="KW-0813">Transport</keyword>
<name>ATPL_ALIB4</name>
<reference key="1">
    <citation type="journal article" date="2007" name="PLoS ONE">
        <title>The complete genome sequence and analysis of the Epsilonproteobacterium Arcobacter butzleri.</title>
        <authorList>
            <person name="Miller W.G."/>
            <person name="Parker C.T."/>
            <person name="Rubenfield M."/>
            <person name="Mendz G.L."/>
            <person name="Woesten M.M.S.M."/>
            <person name="Ussery D.W."/>
            <person name="Stolz J.F."/>
            <person name="Binnewies T.T."/>
            <person name="Hallin P.F."/>
            <person name="Wang G."/>
            <person name="Malek J.A."/>
            <person name="Rogosin A."/>
            <person name="Stanker L.H."/>
            <person name="Mandrell R.E."/>
        </authorList>
    </citation>
    <scope>NUCLEOTIDE SEQUENCE [LARGE SCALE GENOMIC DNA]</scope>
    <source>
        <strain>RM4018</strain>
    </source>
</reference>
<feature type="chain" id="PRO_0000365842" description="ATP synthase subunit c">
    <location>
        <begin position="1"/>
        <end position="104"/>
    </location>
</feature>
<feature type="transmembrane region" description="Helical" evidence="1">
    <location>
        <begin position="31"/>
        <end position="51"/>
    </location>
</feature>
<feature type="transmembrane region" description="Helical" evidence="1">
    <location>
        <begin position="75"/>
        <end position="95"/>
    </location>
</feature>
<feature type="site" description="Reversibly protonated during proton transport" evidence="1">
    <location>
        <position position="83"/>
    </location>
</feature>
<protein>
    <recommendedName>
        <fullName evidence="1">ATP synthase subunit c</fullName>
    </recommendedName>
    <alternativeName>
        <fullName evidence="1">ATP synthase F(0) sector subunit c</fullName>
    </alternativeName>
    <alternativeName>
        <fullName evidence="1">F-type ATPase subunit c</fullName>
        <shortName evidence="1">F-ATPase subunit c</shortName>
    </alternativeName>
    <alternativeName>
        <fullName evidence="1">Lipid-binding protein</fullName>
    </alternativeName>
</protein>
<comment type="function">
    <text evidence="1">F(1)F(0) ATP synthase produces ATP from ADP in the presence of a proton or sodium gradient. F-type ATPases consist of two structural domains, F(1) containing the extramembraneous catalytic core and F(0) containing the membrane proton channel, linked together by a central stalk and a peripheral stalk. During catalysis, ATP synthesis in the catalytic domain of F(1) is coupled via a rotary mechanism of the central stalk subunits to proton translocation.</text>
</comment>
<comment type="function">
    <text evidence="1">Key component of the F(0) channel; it plays a direct role in translocation across the membrane. A homomeric c-ring of between 10-14 subunits forms the central stalk rotor element with the F(1) delta and epsilon subunits.</text>
</comment>
<comment type="subunit">
    <text evidence="1">F-type ATPases have 2 components, F(1) - the catalytic core - and F(0) - the membrane proton channel. F(1) has five subunits: alpha(3), beta(3), gamma(1), delta(1), epsilon(1). F(0) has three main subunits: a(1), b(2) and c(10-14). The alpha and beta chains form an alternating ring which encloses part of the gamma chain. F(1) is attached to F(0) by a central stalk formed by the gamma and epsilon chains, while a peripheral stalk is formed by the delta and b chains.</text>
</comment>
<comment type="subcellular location">
    <subcellularLocation>
        <location evidence="1">Cell inner membrane</location>
        <topology evidence="1">Multi-pass membrane protein</topology>
    </subcellularLocation>
</comment>
<comment type="similarity">
    <text evidence="1">Belongs to the ATPase C chain family.</text>
</comment>
<proteinExistence type="inferred from homology"/>
<gene>
    <name evidence="1" type="primary">atpE</name>
    <name type="ordered locus">Abu_1748</name>
</gene>
<organism>
    <name type="scientific">Aliarcobacter butzleri (strain RM4018)</name>
    <name type="common">Arcobacter butzleri</name>
    <dbReference type="NCBI Taxonomy" id="367737"/>
    <lineage>
        <taxon>Bacteria</taxon>
        <taxon>Pseudomonadati</taxon>
        <taxon>Campylobacterota</taxon>
        <taxon>Epsilonproteobacteria</taxon>
        <taxon>Campylobacterales</taxon>
        <taxon>Arcobacteraceae</taxon>
        <taxon>Aliarcobacter</taxon>
    </lineage>
</organism>
<sequence>MKKIVLLMLAIAGIAFAADEAVVNETLKAYSVVAAGIGLGLAALGGAIGMGNTAAATIAGTARNPGLGGKLMTTMFIALAMIEAQVIYALVVAMIALYANPFLG</sequence>
<evidence type="ECO:0000255" key="1">
    <source>
        <dbReference type="HAMAP-Rule" id="MF_01396"/>
    </source>
</evidence>